<evidence type="ECO:0000255" key="1">
    <source>
        <dbReference type="HAMAP-Rule" id="MF_00537"/>
    </source>
</evidence>
<evidence type="ECO:0000305" key="2"/>
<proteinExistence type="inferred from homology"/>
<organism>
    <name type="scientific">Polaromonas naphthalenivorans (strain CJ2)</name>
    <dbReference type="NCBI Taxonomy" id="365044"/>
    <lineage>
        <taxon>Bacteria</taxon>
        <taxon>Pseudomonadati</taxon>
        <taxon>Pseudomonadota</taxon>
        <taxon>Betaproteobacteria</taxon>
        <taxon>Burkholderiales</taxon>
        <taxon>Comamonadaceae</taxon>
        <taxon>Polaromonas</taxon>
    </lineage>
</organism>
<comment type="function">
    <text evidence="1">Binds 16S rRNA, required for the assembly of 30S particles and may also be responsible for determining the conformation of the 16S rRNA at the A site.</text>
</comment>
<comment type="subunit">
    <text evidence="1">Part of the 30S ribosomal subunit. Contacts proteins S3 and S10.</text>
</comment>
<comment type="similarity">
    <text evidence="1">Belongs to the universal ribosomal protein uS14 family.</text>
</comment>
<gene>
    <name evidence="1" type="primary">rpsN</name>
    <name type="ordered locus">Pnap_0333</name>
</gene>
<keyword id="KW-1185">Reference proteome</keyword>
<keyword id="KW-0687">Ribonucleoprotein</keyword>
<keyword id="KW-0689">Ribosomal protein</keyword>
<keyword id="KW-0694">RNA-binding</keyword>
<keyword id="KW-0699">rRNA-binding</keyword>
<accession>A1VJ28</accession>
<dbReference type="EMBL" id="CP000529">
    <property type="protein sequence ID" value="ABM35656.1"/>
    <property type="molecule type" value="Genomic_DNA"/>
</dbReference>
<dbReference type="RefSeq" id="WP_011799762.1">
    <property type="nucleotide sequence ID" value="NC_008781.1"/>
</dbReference>
<dbReference type="SMR" id="A1VJ28"/>
<dbReference type="STRING" id="365044.Pnap_0333"/>
<dbReference type="KEGG" id="pna:Pnap_0333"/>
<dbReference type="eggNOG" id="COG0199">
    <property type="taxonomic scope" value="Bacteria"/>
</dbReference>
<dbReference type="HOGENOM" id="CLU_139869_0_1_4"/>
<dbReference type="OrthoDB" id="9810484at2"/>
<dbReference type="Proteomes" id="UP000000644">
    <property type="component" value="Chromosome"/>
</dbReference>
<dbReference type="GO" id="GO:0005737">
    <property type="term" value="C:cytoplasm"/>
    <property type="evidence" value="ECO:0007669"/>
    <property type="project" value="UniProtKB-ARBA"/>
</dbReference>
<dbReference type="GO" id="GO:0015935">
    <property type="term" value="C:small ribosomal subunit"/>
    <property type="evidence" value="ECO:0007669"/>
    <property type="project" value="TreeGrafter"/>
</dbReference>
<dbReference type="GO" id="GO:0019843">
    <property type="term" value="F:rRNA binding"/>
    <property type="evidence" value="ECO:0007669"/>
    <property type="project" value="UniProtKB-UniRule"/>
</dbReference>
<dbReference type="GO" id="GO:0003735">
    <property type="term" value="F:structural constituent of ribosome"/>
    <property type="evidence" value="ECO:0007669"/>
    <property type="project" value="InterPro"/>
</dbReference>
<dbReference type="GO" id="GO:0006412">
    <property type="term" value="P:translation"/>
    <property type="evidence" value="ECO:0007669"/>
    <property type="project" value="UniProtKB-UniRule"/>
</dbReference>
<dbReference type="FunFam" id="1.10.287.1480:FF:000001">
    <property type="entry name" value="30S ribosomal protein S14"/>
    <property type="match status" value="1"/>
</dbReference>
<dbReference type="Gene3D" id="1.10.287.1480">
    <property type="match status" value="1"/>
</dbReference>
<dbReference type="HAMAP" id="MF_00537">
    <property type="entry name" value="Ribosomal_uS14_1"/>
    <property type="match status" value="1"/>
</dbReference>
<dbReference type="InterPro" id="IPR001209">
    <property type="entry name" value="Ribosomal_uS14"/>
</dbReference>
<dbReference type="InterPro" id="IPR023036">
    <property type="entry name" value="Ribosomal_uS14_bac/plastid"/>
</dbReference>
<dbReference type="NCBIfam" id="NF006477">
    <property type="entry name" value="PRK08881.1"/>
    <property type="match status" value="1"/>
</dbReference>
<dbReference type="PANTHER" id="PTHR19836">
    <property type="entry name" value="30S RIBOSOMAL PROTEIN S14"/>
    <property type="match status" value="1"/>
</dbReference>
<dbReference type="PANTHER" id="PTHR19836:SF19">
    <property type="entry name" value="SMALL RIBOSOMAL SUBUNIT PROTEIN US14M"/>
    <property type="match status" value="1"/>
</dbReference>
<dbReference type="Pfam" id="PF00253">
    <property type="entry name" value="Ribosomal_S14"/>
    <property type="match status" value="1"/>
</dbReference>
<dbReference type="SUPFAM" id="SSF57716">
    <property type="entry name" value="Glucocorticoid receptor-like (DNA-binding domain)"/>
    <property type="match status" value="1"/>
</dbReference>
<feature type="chain" id="PRO_1000128489" description="Small ribosomal subunit protein uS14">
    <location>
        <begin position="1"/>
        <end position="101"/>
    </location>
</feature>
<name>RS14_POLNA</name>
<sequence>MAKQALLQRELKRDKLVAKFAKKHAEFKAIANDFKRTDDERALARLELQKLPRNANPTRQRNRCAITGRPRGTFRQFGLARAKIRELAFAGDIPGITKASW</sequence>
<protein>
    <recommendedName>
        <fullName evidence="1">Small ribosomal subunit protein uS14</fullName>
    </recommendedName>
    <alternativeName>
        <fullName evidence="2">30S ribosomal protein S14</fullName>
    </alternativeName>
</protein>
<reference key="1">
    <citation type="journal article" date="2009" name="Environ. Microbiol.">
        <title>The genome of Polaromonas naphthalenivorans strain CJ2, isolated from coal tar-contaminated sediment, reveals physiological and metabolic versatility and evolution through extensive horizontal gene transfer.</title>
        <authorList>
            <person name="Yagi J.M."/>
            <person name="Sims D."/>
            <person name="Brettin T."/>
            <person name="Bruce D."/>
            <person name="Madsen E.L."/>
        </authorList>
    </citation>
    <scope>NUCLEOTIDE SEQUENCE [LARGE SCALE GENOMIC DNA]</scope>
    <source>
        <strain>CJ2</strain>
    </source>
</reference>